<proteinExistence type="predicted"/>
<accession>Q6R7H0</accession>
<organism>
    <name type="scientific">Ostreid herpesvirus 1 (isolate France)</name>
    <name type="common">OsHV-1</name>
    <name type="synonym">Pacific oyster herpesvirus</name>
    <dbReference type="NCBI Taxonomy" id="654903"/>
    <lineage>
        <taxon>Viruses</taxon>
        <taxon>Duplodnaviria</taxon>
        <taxon>Heunggongvirae</taxon>
        <taxon>Peploviricota</taxon>
        <taxon>Herviviricetes</taxon>
        <taxon>Herpesvirales</taxon>
        <taxon>Malacoherpesviridae</taxon>
        <taxon>Ostreavirus</taxon>
        <taxon>Ostreavirus ostreidmalaco1</taxon>
        <taxon>Ostreid herpesvirus 1</taxon>
    </lineage>
</organism>
<reference key="1">
    <citation type="journal article" date="2005" name="J. Gen. Virol.">
        <title>A novel class of herpesvirus with bivalve hosts.</title>
        <authorList>
            <person name="Davison A.J."/>
            <person name="Trus B.L."/>
            <person name="Cheng N."/>
            <person name="Steven A.C."/>
            <person name="Watson M.S."/>
            <person name="Cunningham C."/>
            <person name="Le Deuff R.M."/>
            <person name="Renault T."/>
        </authorList>
    </citation>
    <scope>NUCLEOTIDE SEQUENCE [LARGE SCALE GENOMIC DNA]</scope>
</reference>
<sequence length="139" mass="15925">MAESAKTTLQLIFGNLAINIDEEEYQMVWGDVADMRNLFLERVPAKDISEIENLEKKDVKFIVDTLDKVLMSNNLYSLEDPAKNPPSLEELYNPTALLLDKVVTPECGSGYKFLVSLTEEDYTAFLFMMYYLEGFLSEM</sequence>
<feature type="chain" id="PRO_0000385081" description="Uncharacterized protein ORF55">
    <location>
        <begin position="1"/>
        <end position="139"/>
    </location>
</feature>
<name>Y055_OSHVF</name>
<gene>
    <name type="ORF">ORF55</name>
</gene>
<protein>
    <recommendedName>
        <fullName>Uncharacterized protein ORF55</fullName>
    </recommendedName>
</protein>
<dbReference type="EMBL" id="AY509253">
    <property type="protein sequence ID" value="AAS00945.1"/>
    <property type="molecule type" value="Genomic_DNA"/>
</dbReference>
<dbReference type="RefSeq" id="YP_024598.1">
    <property type="nucleotide sequence ID" value="NC_005881.2"/>
</dbReference>
<dbReference type="KEGG" id="vg:2948167"/>
<dbReference type="Proteomes" id="UP000007021">
    <property type="component" value="Segment"/>
</dbReference>
<keyword id="KW-1185">Reference proteome</keyword>
<organismHost>
    <name type="scientific">Magallana gigas</name>
    <name type="common">Pacific oyster</name>
    <name type="synonym">Crassostrea gigas</name>
    <dbReference type="NCBI Taxonomy" id="29159"/>
</organismHost>
<organismHost>
    <name type="scientific">Pecten maximus</name>
    <name type="common">King scallop</name>
    <name type="synonym">Pilgrim's clam</name>
    <dbReference type="NCBI Taxonomy" id="6579"/>
</organismHost>